<proteinExistence type="inferred from homology"/>
<evidence type="ECO:0000255" key="1">
    <source>
        <dbReference type="HAMAP-Rule" id="MF_00006"/>
    </source>
</evidence>
<comment type="catalytic activity">
    <reaction evidence="1">
        <text>2-(N(omega)-L-arginino)succinate = fumarate + L-arginine</text>
        <dbReference type="Rhea" id="RHEA:24020"/>
        <dbReference type="ChEBI" id="CHEBI:29806"/>
        <dbReference type="ChEBI" id="CHEBI:32682"/>
        <dbReference type="ChEBI" id="CHEBI:57472"/>
        <dbReference type="EC" id="4.3.2.1"/>
    </reaction>
</comment>
<comment type="pathway">
    <text evidence="1">Amino-acid biosynthesis; L-arginine biosynthesis; L-arginine from L-ornithine and carbamoyl phosphate: step 3/3.</text>
</comment>
<comment type="subcellular location">
    <subcellularLocation>
        <location evidence="1">Cytoplasm</location>
    </subcellularLocation>
</comment>
<comment type="similarity">
    <text evidence="1">Belongs to the lyase 1 family. Argininosuccinate lyase subfamily.</text>
</comment>
<sequence>MKLWGGRFKEEESKLMEDFNSSLSFDKKLYYEDIKGSIAHVKMLANQNIIKEEEKEKILLGLEEILKEIDEGILKIEGDYEDIHSFVEINLINKIGNVGKKLHTGRSRNDQVALDMKLYAKKSTEEVIECLKELMDSLIKVGNENNYIMPGYTHLQRAQVVTFRYHLLAYFEMFKRDEKRLENALEFLNESPLGSGALAGSTYNIDREYTAKLLGFRKPVDNFLDGVSDRDYIIELISKFSIIMMHLSRLSEELILWSSSEFRFIQIGDAYSTGSSIMPQKKNPDGAELIRGKIGRVYGDLISILTVMKSLPLAYNKDMQEDKEPFFDAKDTVISCLKVMEGIISTLKVNKENLMKSVKKGFLNATEAADYLVNKGMAFRDAHKVIGEVVIYCEDKNSAIEDLSLEELKQFSDLFCEDIYEFIDYKNSINKGIKKEMGYF</sequence>
<feature type="chain" id="PRO_1000201692" description="Argininosuccinate lyase">
    <location>
        <begin position="1"/>
        <end position="440"/>
    </location>
</feature>
<reference key="1">
    <citation type="submission" date="2008-05" db="EMBL/GenBank/DDBJ databases">
        <title>Genome sequence of Clostridium botulinum Ba4 strain 657.</title>
        <authorList>
            <person name="Shrivastava S."/>
            <person name="Brown J.L."/>
            <person name="Bruce D."/>
            <person name="Detter C."/>
            <person name="Munk C."/>
            <person name="Smith L.A."/>
            <person name="Smith T.J."/>
            <person name="Sutton G."/>
            <person name="Brettin T.S."/>
        </authorList>
    </citation>
    <scope>NUCLEOTIDE SEQUENCE [LARGE SCALE GENOMIC DNA]</scope>
    <source>
        <strain>657 / Type Ba4</strain>
    </source>
</reference>
<gene>
    <name evidence="1" type="primary">argH</name>
    <name type="ordered locus">CLJ_B2900</name>
</gene>
<keyword id="KW-0028">Amino-acid biosynthesis</keyword>
<keyword id="KW-0055">Arginine biosynthesis</keyword>
<keyword id="KW-0963">Cytoplasm</keyword>
<keyword id="KW-0456">Lyase</keyword>
<accession>C3L1U2</accession>
<protein>
    <recommendedName>
        <fullName evidence="1">Argininosuccinate lyase</fullName>
        <shortName evidence="1">ASAL</shortName>
        <ecNumber evidence="1">4.3.2.1</ecNumber>
    </recommendedName>
    <alternativeName>
        <fullName evidence="1">Arginosuccinase</fullName>
    </alternativeName>
</protein>
<name>ARLY_CLOB6</name>
<dbReference type="EC" id="4.3.2.1" evidence="1"/>
<dbReference type="EMBL" id="CP001083">
    <property type="protein sequence ID" value="ACQ54208.1"/>
    <property type="molecule type" value="Genomic_DNA"/>
</dbReference>
<dbReference type="RefSeq" id="WP_003361359.1">
    <property type="nucleotide sequence ID" value="NC_012658.1"/>
</dbReference>
<dbReference type="SMR" id="C3L1U2"/>
<dbReference type="KEGG" id="cbi:CLJ_B2900"/>
<dbReference type="HOGENOM" id="CLU_027272_2_3_9"/>
<dbReference type="UniPathway" id="UPA00068">
    <property type="reaction ID" value="UER00114"/>
</dbReference>
<dbReference type="Proteomes" id="UP000002333">
    <property type="component" value="Chromosome"/>
</dbReference>
<dbReference type="GO" id="GO:0005829">
    <property type="term" value="C:cytosol"/>
    <property type="evidence" value="ECO:0007669"/>
    <property type="project" value="TreeGrafter"/>
</dbReference>
<dbReference type="GO" id="GO:0004056">
    <property type="term" value="F:argininosuccinate lyase activity"/>
    <property type="evidence" value="ECO:0007669"/>
    <property type="project" value="UniProtKB-UniRule"/>
</dbReference>
<dbReference type="GO" id="GO:0042450">
    <property type="term" value="P:arginine biosynthetic process via ornithine"/>
    <property type="evidence" value="ECO:0007669"/>
    <property type="project" value="InterPro"/>
</dbReference>
<dbReference type="GO" id="GO:0006526">
    <property type="term" value="P:L-arginine biosynthetic process"/>
    <property type="evidence" value="ECO:0007669"/>
    <property type="project" value="UniProtKB-UniRule"/>
</dbReference>
<dbReference type="CDD" id="cd01359">
    <property type="entry name" value="Argininosuccinate_lyase"/>
    <property type="match status" value="1"/>
</dbReference>
<dbReference type="FunFam" id="1.10.275.10:FF:000002">
    <property type="entry name" value="Argininosuccinate lyase"/>
    <property type="match status" value="1"/>
</dbReference>
<dbReference type="FunFam" id="1.10.40.30:FF:000001">
    <property type="entry name" value="Argininosuccinate lyase"/>
    <property type="match status" value="1"/>
</dbReference>
<dbReference type="FunFam" id="1.20.200.10:FF:000002">
    <property type="entry name" value="Argininosuccinate lyase"/>
    <property type="match status" value="1"/>
</dbReference>
<dbReference type="Gene3D" id="1.10.40.30">
    <property type="entry name" value="Fumarase/aspartase (C-terminal domain)"/>
    <property type="match status" value="1"/>
</dbReference>
<dbReference type="Gene3D" id="1.20.200.10">
    <property type="entry name" value="Fumarase/aspartase (Central domain)"/>
    <property type="match status" value="1"/>
</dbReference>
<dbReference type="Gene3D" id="1.10.275.10">
    <property type="entry name" value="Fumarase/aspartase (N-terminal domain)"/>
    <property type="match status" value="1"/>
</dbReference>
<dbReference type="HAMAP" id="MF_00006">
    <property type="entry name" value="Arg_succ_lyase"/>
    <property type="match status" value="1"/>
</dbReference>
<dbReference type="InterPro" id="IPR029419">
    <property type="entry name" value="Arg_succ_lyase_C"/>
</dbReference>
<dbReference type="InterPro" id="IPR009049">
    <property type="entry name" value="Argininosuccinate_lyase"/>
</dbReference>
<dbReference type="InterPro" id="IPR024083">
    <property type="entry name" value="Fumarase/histidase_N"/>
</dbReference>
<dbReference type="InterPro" id="IPR020557">
    <property type="entry name" value="Fumarate_lyase_CS"/>
</dbReference>
<dbReference type="InterPro" id="IPR000362">
    <property type="entry name" value="Fumarate_lyase_fam"/>
</dbReference>
<dbReference type="InterPro" id="IPR022761">
    <property type="entry name" value="Fumarate_lyase_N"/>
</dbReference>
<dbReference type="InterPro" id="IPR008948">
    <property type="entry name" value="L-Aspartase-like"/>
</dbReference>
<dbReference type="NCBIfam" id="TIGR00838">
    <property type="entry name" value="argH"/>
    <property type="match status" value="1"/>
</dbReference>
<dbReference type="PANTHER" id="PTHR43814">
    <property type="entry name" value="ARGININOSUCCINATE LYASE"/>
    <property type="match status" value="1"/>
</dbReference>
<dbReference type="PANTHER" id="PTHR43814:SF1">
    <property type="entry name" value="ARGININOSUCCINATE LYASE"/>
    <property type="match status" value="1"/>
</dbReference>
<dbReference type="Pfam" id="PF14698">
    <property type="entry name" value="ASL_C2"/>
    <property type="match status" value="1"/>
</dbReference>
<dbReference type="Pfam" id="PF00206">
    <property type="entry name" value="Lyase_1"/>
    <property type="match status" value="1"/>
</dbReference>
<dbReference type="PRINTS" id="PR00145">
    <property type="entry name" value="ARGSUCLYASE"/>
</dbReference>
<dbReference type="PRINTS" id="PR00149">
    <property type="entry name" value="FUMRATELYASE"/>
</dbReference>
<dbReference type="SUPFAM" id="SSF48557">
    <property type="entry name" value="L-aspartase-like"/>
    <property type="match status" value="1"/>
</dbReference>
<dbReference type="PROSITE" id="PS00163">
    <property type="entry name" value="FUMARATE_LYASES"/>
    <property type="match status" value="1"/>
</dbReference>
<organism>
    <name type="scientific">Clostridium botulinum (strain 657 / Type Ba4)</name>
    <dbReference type="NCBI Taxonomy" id="515621"/>
    <lineage>
        <taxon>Bacteria</taxon>
        <taxon>Bacillati</taxon>
        <taxon>Bacillota</taxon>
        <taxon>Clostridia</taxon>
        <taxon>Eubacteriales</taxon>
        <taxon>Clostridiaceae</taxon>
        <taxon>Clostridium</taxon>
    </lineage>
</organism>